<protein>
    <recommendedName>
        <fullName>Putative autolysin regulatory protein ArpU</fullName>
    </recommendedName>
</protein>
<dbReference type="EMBL" id="U88974">
    <property type="protein sequence ID" value="AAC79540.1"/>
    <property type="molecule type" value="Genomic_DNA"/>
</dbReference>
<dbReference type="RefSeq" id="NP_695102.1">
    <property type="nucleotide sequence ID" value="NC_004303.1"/>
</dbReference>
<dbReference type="SMR" id="O34055"/>
<dbReference type="KEGG" id="vg:955620"/>
<dbReference type="OrthoDB" id="12624at10239"/>
<dbReference type="Proteomes" id="UP000000371">
    <property type="component" value="Segment"/>
</dbReference>
<dbReference type="InterPro" id="IPR006524">
    <property type="entry name" value="ArpU-like"/>
</dbReference>
<dbReference type="NCBIfam" id="TIGR01637">
    <property type="entry name" value="phage_arpU"/>
    <property type="match status" value="1"/>
</dbReference>
<sequence length="138" mass="16142">MLLPEIDEKATVKRCKRKLREYPRWREIAHDSAEQKITQEFTFMPRGGSGVNKPVENIAVRRVDALSELEAIEQAVNGLYRPDYRRILIEKYLAYPPQPNWKIAQAIGFERTAFQELLKHSILAFAELYRNGQLVVER</sequence>
<organismHost>
    <name type="scientific">Streptococcus thermophilus</name>
    <dbReference type="NCBI Taxonomy" id="1308"/>
</organismHost>
<accession>O34055</accession>
<gene>
    <name type="primary">arpU</name>
</gene>
<comment type="function">
    <text evidence="1">May be involved in the regulation of muramidase export.</text>
</comment>
<organism>
    <name type="scientific">Streptococcus phage O1205</name>
    <name type="common">Streptococcus bacteriophage phi-O1205</name>
    <dbReference type="NCBI Taxonomy" id="85154"/>
    <lineage>
        <taxon>Viruses</taxon>
        <taxon>Duplodnaviria</taxon>
        <taxon>Heunggongvirae</taxon>
        <taxon>Uroviricota</taxon>
        <taxon>Caudoviricetes</taxon>
        <taxon>Aliceevansviridae</taxon>
        <taxon>Brussowvirus</taxon>
    </lineage>
</organism>
<feature type="chain" id="PRO_0000064686" description="Putative autolysin regulatory protein ArpU">
    <location>
        <begin position="1"/>
        <end position="138"/>
    </location>
</feature>
<evidence type="ECO:0000250" key="1"/>
<reference key="1">
    <citation type="journal article" date="1997" name="Microbiology">
        <title>Sequence analysis and characterization of phi O1205, a temperate bacteriophage infecting Streptococcus thermophilus CNRZ1205.</title>
        <authorList>
            <person name="Stanley E."/>
            <person name="Fitzgerald G.F."/>
            <person name="le Marrec C."/>
            <person name="Fayard B."/>
            <person name="van Sinderen D."/>
        </authorList>
    </citation>
    <scope>NUCLEOTIDE SEQUENCE [GENOMIC DNA]</scope>
</reference>
<keyword id="KW-0813">Transport</keyword>
<proteinExistence type="inferred from homology"/>
<name>ARPU_BPO12</name>